<organism>
    <name type="scientific">Mus musculus</name>
    <name type="common">Mouse</name>
    <dbReference type="NCBI Taxonomy" id="10090"/>
    <lineage>
        <taxon>Eukaryota</taxon>
        <taxon>Metazoa</taxon>
        <taxon>Chordata</taxon>
        <taxon>Craniata</taxon>
        <taxon>Vertebrata</taxon>
        <taxon>Euteleostomi</taxon>
        <taxon>Mammalia</taxon>
        <taxon>Eutheria</taxon>
        <taxon>Euarchontoglires</taxon>
        <taxon>Glires</taxon>
        <taxon>Rodentia</taxon>
        <taxon>Myomorpha</taxon>
        <taxon>Muroidea</taxon>
        <taxon>Muridae</taxon>
        <taxon>Murinae</taxon>
        <taxon>Mus</taxon>
        <taxon>Mus</taxon>
    </lineage>
</organism>
<evidence type="ECO:0000250" key="1"/>
<evidence type="ECO:0000250" key="2">
    <source>
        <dbReference type="UniProtKB" id="P98155"/>
    </source>
</evidence>
<evidence type="ECO:0000255" key="3"/>
<evidence type="ECO:0000255" key="4">
    <source>
        <dbReference type="PROSITE-ProRule" id="PRU00076"/>
    </source>
</evidence>
<evidence type="ECO:0000255" key="5">
    <source>
        <dbReference type="PROSITE-ProRule" id="PRU00124"/>
    </source>
</evidence>
<evidence type="ECO:0000269" key="6">
    <source>
    </source>
</evidence>
<evidence type="ECO:0000269" key="7">
    <source>
    </source>
</evidence>
<evidence type="ECO:0000269" key="8">
    <source>
    </source>
</evidence>
<evidence type="ECO:0000269" key="9">
    <source>
    </source>
</evidence>
<evidence type="ECO:0000269" key="10">
    <source>
    </source>
</evidence>
<evidence type="ECO:0000269" key="11">
    <source>
    </source>
</evidence>
<evidence type="ECO:0000269" key="12">
    <source>
    </source>
</evidence>
<evidence type="ECO:0000305" key="13"/>
<feature type="signal peptide" evidence="3">
    <location>
        <begin position="1"/>
        <end position="27"/>
    </location>
</feature>
<feature type="chain" id="PRO_0000017344" description="Very low-density lipoprotein receptor">
    <location>
        <begin position="28"/>
        <end position="873"/>
    </location>
</feature>
<feature type="topological domain" description="Extracellular" evidence="3">
    <location>
        <begin position="28"/>
        <end position="797"/>
    </location>
</feature>
<feature type="transmembrane region" description="Helical" evidence="3">
    <location>
        <begin position="798"/>
        <end position="819"/>
    </location>
</feature>
<feature type="topological domain" description="Cytoplasmic" evidence="3">
    <location>
        <begin position="820"/>
        <end position="873"/>
    </location>
</feature>
<feature type="domain" description="LDL-receptor class A 1" evidence="5">
    <location>
        <begin position="31"/>
        <end position="69"/>
    </location>
</feature>
<feature type="domain" description="LDL-receptor class A 2" evidence="5">
    <location>
        <begin position="70"/>
        <end position="110"/>
    </location>
</feature>
<feature type="domain" description="LDL-receptor class A 3" evidence="5">
    <location>
        <begin position="111"/>
        <end position="151"/>
    </location>
</feature>
<feature type="domain" description="LDL-receptor class A 4" evidence="5">
    <location>
        <begin position="152"/>
        <end position="190"/>
    </location>
</feature>
<feature type="domain" description="LDL-receptor class A 5" evidence="5">
    <location>
        <begin position="191"/>
        <end position="231"/>
    </location>
</feature>
<feature type="domain" description="LDL-receptor class A 6" evidence="5">
    <location>
        <begin position="237"/>
        <end position="275"/>
    </location>
</feature>
<feature type="domain" description="LDL-receptor class A 7" evidence="5">
    <location>
        <begin position="276"/>
        <end position="314"/>
    </location>
</feature>
<feature type="domain" description="LDL-receptor class A 8" evidence="5">
    <location>
        <begin position="316"/>
        <end position="355"/>
    </location>
</feature>
<feature type="domain" description="EGF-like 1" evidence="4">
    <location>
        <begin position="356"/>
        <end position="391"/>
    </location>
</feature>
<feature type="domain" description="EGF-like 2; calcium-binding" evidence="4">
    <location>
        <begin position="396"/>
        <end position="431"/>
    </location>
</feature>
<feature type="repeat" description="LDL-receptor class B 1">
    <location>
        <begin position="439"/>
        <end position="480"/>
    </location>
</feature>
<feature type="repeat" description="LDL-receptor class B 2">
    <location>
        <begin position="481"/>
        <end position="524"/>
    </location>
</feature>
<feature type="repeat" description="LDL-receptor class B 3">
    <location>
        <begin position="525"/>
        <end position="567"/>
    </location>
</feature>
<feature type="repeat" description="LDL-receptor class B 4">
    <location>
        <begin position="568"/>
        <end position="611"/>
    </location>
</feature>
<feature type="repeat" description="LDL-receptor class B 5">
    <location>
        <begin position="612"/>
        <end position="654"/>
    </location>
</feature>
<feature type="repeat" description="LDL-receptor class B 6">
    <location>
        <begin position="655"/>
        <end position="697"/>
    </location>
</feature>
<feature type="domain" description="EGF-like 3" evidence="4">
    <location>
        <begin position="702"/>
        <end position="750"/>
    </location>
</feature>
<feature type="region of interest" description="Clustered O-linked oligosaccharides">
    <location>
        <begin position="751"/>
        <end position="790"/>
    </location>
</feature>
<feature type="short sequence motif" description="Endocytosis signal" evidence="3">
    <location>
        <begin position="832"/>
        <end position="837"/>
    </location>
</feature>
<feature type="glycosylation site" description="N-linked (GlcNAc...) asparagine" evidence="3">
    <location>
        <position position="151"/>
    </location>
</feature>
<feature type="glycosylation site" description="N-linked (GlcNAc...) asparagine" evidence="3">
    <location>
        <position position="765"/>
    </location>
</feature>
<feature type="glycosylation site" description="N-linked (GlcNAc...) asparagine" evidence="3">
    <location>
        <position position="781"/>
    </location>
</feature>
<feature type="disulfide bond" evidence="1">
    <location>
        <begin position="33"/>
        <end position="45"/>
    </location>
</feature>
<feature type="disulfide bond" evidence="1">
    <location>
        <begin position="40"/>
        <end position="58"/>
    </location>
</feature>
<feature type="disulfide bond" evidence="1">
    <location>
        <begin position="52"/>
        <end position="67"/>
    </location>
</feature>
<feature type="disulfide bond" evidence="1">
    <location>
        <begin position="72"/>
        <end position="84"/>
    </location>
</feature>
<feature type="disulfide bond" evidence="1">
    <location>
        <begin position="79"/>
        <end position="97"/>
    </location>
</feature>
<feature type="disulfide bond" evidence="1">
    <location>
        <begin position="91"/>
        <end position="108"/>
    </location>
</feature>
<feature type="disulfide bond" evidence="1">
    <location>
        <begin position="113"/>
        <end position="127"/>
    </location>
</feature>
<feature type="disulfide bond" evidence="1">
    <location>
        <begin position="120"/>
        <end position="140"/>
    </location>
</feature>
<feature type="disulfide bond" evidence="1">
    <location>
        <begin position="134"/>
        <end position="149"/>
    </location>
</feature>
<feature type="disulfide bond" evidence="1">
    <location>
        <begin position="154"/>
        <end position="166"/>
    </location>
</feature>
<feature type="disulfide bond" evidence="1">
    <location>
        <begin position="161"/>
        <end position="179"/>
    </location>
</feature>
<feature type="disulfide bond" evidence="1">
    <location>
        <begin position="173"/>
        <end position="188"/>
    </location>
</feature>
<feature type="disulfide bond" evidence="1">
    <location>
        <begin position="193"/>
        <end position="205"/>
    </location>
</feature>
<feature type="disulfide bond" evidence="1">
    <location>
        <begin position="200"/>
        <end position="218"/>
    </location>
</feature>
<feature type="disulfide bond" evidence="1">
    <location>
        <begin position="212"/>
        <end position="229"/>
    </location>
</feature>
<feature type="disulfide bond" evidence="1">
    <location>
        <begin position="239"/>
        <end position="251"/>
    </location>
</feature>
<feature type="disulfide bond" evidence="1">
    <location>
        <begin position="246"/>
        <end position="264"/>
    </location>
</feature>
<feature type="disulfide bond" evidence="1">
    <location>
        <begin position="258"/>
        <end position="273"/>
    </location>
</feature>
<feature type="disulfide bond" evidence="1">
    <location>
        <begin position="278"/>
        <end position="290"/>
    </location>
</feature>
<feature type="disulfide bond" evidence="1">
    <location>
        <begin position="285"/>
        <end position="303"/>
    </location>
</feature>
<feature type="disulfide bond" evidence="1">
    <location>
        <begin position="297"/>
        <end position="312"/>
    </location>
</feature>
<feature type="disulfide bond" evidence="1">
    <location>
        <begin position="318"/>
        <end position="331"/>
    </location>
</feature>
<feature type="disulfide bond" evidence="1">
    <location>
        <begin position="326"/>
        <end position="344"/>
    </location>
</feature>
<feature type="disulfide bond" evidence="1">
    <location>
        <begin position="338"/>
        <end position="355"/>
    </location>
</feature>
<feature type="disulfide bond" evidence="1">
    <location>
        <begin position="360"/>
        <end position="371"/>
    </location>
</feature>
<feature type="disulfide bond" evidence="1">
    <location>
        <begin position="367"/>
        <end position="380"/>
    </location>
</feature>
<feature type="disulfide bond" evidence="1">
    <location>
        <begin position="382"/>
        <end position="394"/>
    </location>
</feature>
<feature type="disulfide bond" evidence="1">
    <location>
        <begin position="400"/>
        <end position="410"/>
    </location>
</feature>
<feature type="disulfide bond" evidence="1">
    <location>
        <begin position="406"/>
        <end position="419"/>
    </location>
</feature>
<feature type="disulfide bond" evidence="1">
    <location>
        <begin position="421"/>
        <end position="434"/>
    </location>
</feature>
<feature type="disulfide bond" evidence="1">
    <location>
        <begin position="706"/>
        <end position="719"/>
    </location>
</feature>
<feature type="disulfide bond" evidence="1">
    <location>
        <begin position="715"/>
        <end position="734"/>
    </location>
</feature>
<feature type="disulfide bond" evidence="1">
    <location>
        <begin position="736"/>
        <end position="749"/>
    </location>
</feature>
<feature type="cross-link" description="Glycyl lysine isopeptide (Lys-Gly) (interchain with G-Cter in ubiquitin)" evidence="2">
    <location>
        <position position="839"/>
    </location>
</feature>
<feature type="sequence conflict" description="In Ref. 1; AAC37668." evidence="13" ref="1">
    <original>C</original>
    <variation>G</variation>
    <location>
        <position position="161"/>
    </location>
</feature>
<feature type="sequence conflict" description="In Ref. 3; AAB32228." evidence="13" ref="3">
    <original>P</original>
    <variation>L</variation>
    <location>
        <position position="262"/>
    </location>
</feature>
<feature type="sequence conflict" description="In Ref. 2; AAA59384." evidence="13" ref="2">
    <original>C</original>
    <variation>S</variation>
    <location>
        <position position="297"/>
    </location>
</feature>
<protein>
    <recommendedName>
        <fullName>Very low-density lipoprotein receptor</fullName>
        <shortName>VLDL receptor</shortName>
        <shortName>VLDL-R</shortName>
    </recommendedName>
</protein>
<sequence length="873" mass="96373">MGTSARWALWLLLALCWAPRDSGATASGKKAKCDSSQFQCTNGRCITLLWKCDGDEDCADGSDEKNCVKKTCAESDFVCKNGQCVPNRWQCDGDPDCEDGSDESPEQCHMRTCRINEISCGARSTQCIPVSWRCDGENDCDNGEDEENCGNITCSADEFTCSSGRCVSRNFVCNGQDDCDDGSDELDCAPPTCGAHEFQCSTSSCIPLSWVCDDDADCSDQSDESLEQCGRQPVIHTKCPTSEIQCGSGECIHKKWRCDGDPDCKDGSDEVNCPSRTCRPDQFECEDGSCIHGSRQCNGIRDCVDGSDEVNCKNVNQCLGPGKFKCRSGECIDMSKVCDQEQDCRDWSDEPLKECHINECLVNNGGCSHICKDLVIGYECDCAAGFELIDRKTCGDIDECQNPGICSQICINLKGGYKCECSRGYQMDLATGVCKAVGKEPSLIFTNRRDIRKIGLERKEYIQLVEQLRNTVALDADIAAQKLFWADLSQKAIFSASIDDKVGRHFKMIDNVYNPAAIAVDWVYKTIYWTDAASKTISVATLDGAKRKFLFNSDLREPASIAVDPLSGFVYWSDWGEPAKIEKAGMNGFDRRPLVTEDIQWPNGITLDLVKSRLYWLDSKLHMLSSVDLNGQDRRIVLKSLEFLAHPLALTIFEDRVYWIDGENEAVYGANKFTGSELATLVNNLNDAQDIIVYHELVQPSGKNWCEDDMENGGCEYLCLPAPQINDHSPKYTCSCPNGYNLEENGRECQSTSTPVTYSETKDINTTDILRTSGLVPGGINVTTAVSEVSVPPKGTSAAWAILPLLLLVMAAVGGYLMWRNWQHKNMKSMNFDNPVYLKTTEEDLSIDIGRHSASVGHTYPAISVVSTDDDLA</sequence>
<proteinExistence type="evidence at protein level"/>
<dbReference type="EMBL" id="L33417">
    <property type="protein sequence ID" value="AAC37668.1"/>
    <property type="molecule type" value="mRNA"/>
</dbReference>
<dbReference type="EMBL" id="U06670">
    <property type="protein sequence ID" value="AAA59384.1"/>
    <property type="molecule type" value="mRNA"/>
</dbReference>
<dbReference type="EMBL" id="S73732">
    <property type="protein sequence ID" value="AAB32228.2"/>
    <property type="molecule type" value="Genomic_DNA"/>
</dbReference>
<dbReference type="CCDS" id="CCDS29721.1"/>
<dbReference type="PIR" id="I48952">
    <property type="entry name" value="I48952"/>
</dbReference>
<dbReference type="RefSeq" id="NP_001154892.1">
    <property type="nucleotide sequence ID" value="NM_001161420.1"/>
</dbReference>
<dbReference type="RefSeq" id="NP_038731.2">
    <property type="nucleotide sequence ID" value="NM_013703.2"/>
</dbReference>
<dbReference type="RefSeq" id="XP_006526980.1">
    <property type="nucleotide sequence ID" value="XM_006526917.2"/>
</dbReference>
<dbReference type="RefSeq" id="XP_006526981.1">
    <property type="nucleotide sequence ID" value="XM_006526918.4"/>
</dbReference>
<dbReference type="RefSeq" id="XP_030106725.1">
    <property type="nucleotide sequence ID" value="XM_030250865.2"/>
</dbReference>
<dbReference type="SMR" id="P98156"/>
<dbReference type="BioGRID" id="204529">
    <property type="interactions" value="9"/>
</dbReference>
<dbReference type="DIP" id="DIP-33283N"/>
<dbReference type="FunCoup" id="P98156">
    <property type="interactions" value="449"/>
</dbReference>
<dbReference type="IntAct" id="P98156">
    <property type="interactions" value="2"/>
</dbReference>
<dbReference type="STRING" id="10090.ENSMUSP00000127329"/>
<dbReference type="GlyCosmos" id="P98156">
    <property type="glycosylation" value="3 sites, No reported glycans"/>
</dbReference>
<dbReference type="GlyGen" id="P98156">
    <property type="glycosylation" value="3 sites, 2 N-linked glycans (2 sites)"/>
</dbReference>
<dbReference type="iPTMnet" id="P98156"/>
<dbReference type="PhosphoSitePlus" id="P98156"/>
<dbReference type="PaxDb" id="10090-ENSMUSP00000127329"/>
<dbReference type="PeptideAtlas" id="P98156"/>
<dbReference type="ProteomicsDB" id="297961"/>
<dbReference type="Antibodypedia" id="9217">
    <property type="antibodies" value="491 antibodies from 37 providers"/>
</dbReference>
<dbReference type="DNASU" id="22359"/>
<dbReference type="Ensembl" id="ENSMUST00000167487.8">
    <property type="protein sequence ID" value="ENSMUSP00000127329.2"/>
    <property type="gene ID" value="ENSMUSG00000024924.15"/>
</dbReference>
<dbReference type="GeneID" id="22359"/>
<dbReference type="KEGG" id="mmu:22359"/>
<dbReference type="UCSC" id="uc008hbt.2">
    <property type="organism name" value="mouse"/>
</dbReference>
<dbReference type="AGR" id="MGI:98935"/>
<dbReference type="CTD" id="7436"/>
<dbReference type="MGI" id="MGI:98935">
    <property type="gene designation" value="Vldlr"/>
</dbReference>
<dbReference type="VEuPathDB" id="HostDB:ENSMUSG00000024924"/>
<dbReference type="eggNOG" id="KOG1215">
    <property type="taxonomic scope" value="Eukaryota"/>
</dbReference>
<dbReference type="GeneTree" id="ENSGT00940000155460"/>
<dbReference type="InParanoid" id="P98156"/>
<dbReference type="OMA" id="ADKRNCQ"/>
<dbReference type="OrthoDB" id="5958943at2759"/>
<dbReference type="PhylomeDB" id="P98156"/>
<dbReference type="TreeFam" id="TF351700"/>
<dbReference type="Reactome" id="R-MMU-8866376">
    <property type="pathway name" value="Reelin signalling pathway"/>
</dbReference>
<dbReference type="Reactome" id="R-MMU-8866427">
    <property type="pathway name" value="VLDLR internalisation and degradation"/>
</dbReference>
<dbReference type="Reactome" id="R-MMU-8964046">
    <property type="pathway name" value="VLDL clearance"/>
</dbReference>
<dbReference type="BioGRID-ORCS" id="22359">
    <property type="hits" value="2 hits in 78 CRISPR screens"/>
</dbReference>
<dbReference type="ChiTaRS" id="Vldlr">
    <property type="organism name" value="mouse"/>
</dbReference>
<dbReference type="PRO" id="PR:P98156"/>
<dbReference type="Proteomes" id="UP000000589">
    <property type="component" value="Chromosome 19"/>
</dbReference>
<dbReference type="RNAct" id="P98156">
    <property type="molecule type" value="protein"/>
</dbReference>
<dbReference type="Bgee" id="ENSMUSG00000024924">
    <property type="expression patterns" value="Expressed in decidua and 274 other cell types or tissues"/>
</dbReference>
<dbReference type="ExpressionAtlas" id="P98156">
    <property type="expression patterns" value="baseline and differential"/>
</dbReference>
<dbReference type="GO" id="GO:0005905">
    <property type="term" value="C:clathrin-coated pit"/>
    <property type="evidence" value="ECO:0007669"/>
    <property type="project" value="UniProtKB-SubCell"/>
</dbReference>
<dbReference type="GO" id="GO:0005615">
    <property type="term" value="C:extracellular space"/>
    <property type="evidence" value="ECO:0000314"/>
    <property type="project" value="BHF-UCL"/>
</dbReference>
<dbReference type="GO" id="GO:0098978">
    <property type="term" value="C:glutamatergic synapse"/>
    <property type="evidence" value="ECO:0000314"/>
    <property type="project" value="SynGO"/>
</dbReference>
<dbReference type="GO" id="GO:0016020">
    <property type="term" value="C:membrane"/>
    <property type="evidence" value="ECO:0000266"/>
    <property type="project" value="MGI"/>
</dbReference>
<dbReference type="GO" id="GO:0043235">
    <property type="term" value="C:receptor complex"/>
    <property type="evidence" value="ECO:0000266"/>
    <property type="project" value="MGI"/>
</dbReference>
<dbReference type="GO" id="GO:0045202">
    <property type="term" value="C:synapse"/>
    <property type="evidence" value="ECO:0000314"/>
    <property type="project" value="SynGO"/>
</dbReference>
<dbReference type="GO" id="GO:0034361">
    <property type="term" value="C:very-low-density lipoprotein particle"/>
    <property type="evidence" value="ECO:0007669"/>
    <property type="project" value="UniProtKB-KW"/>
</dbReference>
<dbReference type="GO" id="GO:0034185">
    <property type="term" value="F:apolipoprotein binding"/>
    <property type="evidence" value="ECO:0007669"/>
    <property type="project" value="Ensembl"/>
</dbReference>
<dbReference type="GO" id="GO:0005509">
    <property type="term" value="F:calcium ion binding"/>
    <property type="evidence" value="ECO:0007669"/>
    <property type="project" value="InterPro"/>
</dbReference>
<dbReference type="GO" id="GO:0048306">
    <property type="term" value="F:calcium-dependent protein binding"/>
    <property type="evidence" value="ECO:0007669"/>
    <property type="project" value="Ensembl"/>
</dbReference>
<dbReference type="GO" id="GO:0038025">
    <property type="term" value="F:reelin receptor activity"/>
    <property type="evidence" value="ECO:0000314"/>
    <property type="project" value="UniProtKB"/>
</dbReference>
<dbReference type="GO" id="GO:0034189">
    <property type="term" value="F:very-low-density lipoprotein particle binding"/>
    <property type="evidence" value="ECO:0007669"/>
    <property type="project" value="Ensembl"/>
</dbReference>
<dbReference type="GO" id="GO:0030229">
    <property type="term" value="F:very-low-density lipoprotein particle receptor activity"/>
    <property type="evidence" value="ECO:0000250"/>
    <property type="project" value="BHF-UCL"/>
</dbReference>
<dbReference type="GO" id="GO:0008203">
    <property type="term" value="P:cholesterol metabolic process"/>
    <property type="evidence" value="ECO:0007669"/>
    <property type="project" value="UniProtKB-KW"/>
</dbReference>
<dbReference type="GO" id="GO:0048813">
    <property type="term" value="P:dendrite morphogenesis"/>
    <property type="evidence" value="ECO:0000315"/>
    <property type="project" value="CACAO"/>
</dbReference>
<dbReference type="GO" id="GO:0034436">
    <property type="term" value="P:glycoprotein transport"/>
    <property type="evidence" value="ECO:0007669"/>
    <property type="project" value="Ensembl"/>
</dbReference>
<dbReference type="GO" id="GO:0006869">
    <property type="term" value="P:lipid transport"/>
    <property type="evidence" value="ECO:0007669"/>
    <property type="project" value="UniProtKB-KW"/>
</dbReference>
<dbReference type="GO" id="GO:1900006">
    <property type="term" value="P:positive regulation of dendrite development"/>
    <property type="evidence" value="ECO:0000316"/>
    <property type="project" value="BHF-UCL"/>
</dbReference>
<dbReference type="GO" id="GO:0006898">
    <property type="term" value="P:receptor-mediated endocytosis"/>
    <property type="evidence" value="ECO:0007669"/>
    <property type="project" value="Ensembl"/>
</dbReference>
<dbReference type="GO" id="GO:0038026">
    <property type="term" value="P:reelin-mediated signaling pathway"/>
    <property type="evidence" value="ECO:0000314"/>
    <property type="project" value="UniProtKB"/>
</dbReference>
<dbReference type="GO" id="GO:0051963">
    <property type="term" value="P:regulation of synapse assembly"/>
    <property type="evidence" value="ECO:0000314"/>
    <property type="project" value="SynGO"/>
</dbReference>
<dbReference type="GO" id="GO:0021517">
    <property type="term" value="P:ventral spinal cord development"/>
    <property type="evidence" value="ECO:0000270"/>
    <property type="project" value="UniProtKB"/>
</dbReference>
<dbReference type="GO" id="GO:0034447">
    <property type="term" value="P:very-low-density lipoprotein particle clearance"/>
    <property type="evidence" value="ECO:0000250"/>
    <property type="project" value="BHF-UCL"/>
</dbReference>
<dbReference type="CDD" id="cd00054">
    <property type="entry name" value="EGF_CA"/>
    <property type="match status" value="1"/>
</dbReference>
<dbReference type="CDD" id="cd00112">
    <property type="entry name" value="LDLa"/>
    <property type="match status" value="8"/>
</dbReference>
<dbReference type="FunFam" id="2.10.25.10:FF:000009">
    <property type="entry name" value="Low-density lipoprotein receptor isoform 1"/>
    <property type="match status" value="1"/>
</dbReference>
<dbReference type="FunFam" id="2.10.25.10:FF:000052">
    <property type="entry name" value="low-density lipoprotein receptor isoform X1"/>
    <property type="match status" value="1"/>
</dbReference>
<dbReference type="FunFam" id="2.120.10.30:FF:000002">
    <property type="entry name" value="low-density lipoprotein receptor isoform X1"/>
    <property type="match status" value="1"/>
</dbReference>
<dbReference type="FunFam" id="4.10.400.10:FF:000025">
    <property type="entry name" value="Very low density lipoprotein receptor"/>
    <property type="match status" value="1"/>
</dbReference>
<dbReference type="FunFam" id="4.10.400.10:FF:000038">
    <property type="entry name" value="Very low density lipoprotein receptor"/>
    <property type="match status" value="1"/>
</dbReference>
<dbReference type="FunFam" id="4.10.400.10:FF:000043">
    <property type="entry name" value="Very low density lipoprotein receptor"/>
    <property type="match status" value="1"/>
</dbReference>
<dbReference type="FunFam" id="4.10.400.10:FF:000046">
    <property type="entry name" value="Very low density lipoprotein receptor"/>
    <property type="match status" value="1"/>
</dbReference>
<dbReference type="FunFam" id="4.10.400.10:FF:000049">
    <property type="entry name" value="Very low density lipoprotein receptor"/>
    <property type="match status" value="1"/>
</dbReference>
<dbReference type="FunFam" id="4.10.400.10:FF:000051">
    <property type="entry name" value="Very low density lipoprotein receptor"/>
    <property type="match status" value="1"/>
</dbReference>
<dbReference type="FunFam" id="4.10.400.10:FF:000053">
    <property type="entry name" value="Very low density lipoprotein receptor"/>
    <property type="match status" value="1"/>
</dbReference>
<dbReference type="FunFam" id="4.10.400.10:FF:000057">
    <property type="entry name" value="Very low density lipoprotein receptor"/>
    <property type="match status" value="1"/>
</dbReference>
<dbReference type="Gene3D" id="2.10.25.10">
    <property type="entry name" value="Laminin"/>
    <property type="match status" value="3"/>
</dbReference>
<dbReference type="Gene3D" id="4.10.400.10">
    <property type="entry name" value="Low-density Lipoprotein Receptor"/>
    <property type="match status" value="8"/>
</dbReference>
<dbReference type="Gene3D" id="2.120.10.30">
    <property type="entry name" value="TolB, C-terminal domain"/>
    <property type="match status" value="1"/>
</dbReference>
<dbReference type="InterPro" id="IPR011042">
    <property type="entry name" value="6-blade_b-propeller_TolB-like"/>
</dbReference>
<dbReference type="InterPro" id="IPR001881">
    <property type="entry name" value="EGF-like_Ca-bd_dom"/>
</dbReference>
<dbReference type="InterPro" id="IPR000742">
    <property type="entry name" value="EGF-like_dom"/>
</dbReference>
<dbReference type="InterPro" id="IPR000152">
    <property type="entry name" value="EGF-type_Asp/Asn_hydroxyl_site"/>
</dbReference>
<dbReference type="InterPro" id="IPR018097">
    <property type="entry name" value="EGF_Ca-bd_CS"/>
</dbReference>
<dbReference type="InterPro" id="IPR009030">
    <property type="entry name" value="Growth_fac_rcpt_cys_sf"/>
</dbReference>
<dbReference type="InterPro" id="IPR036055">
    <property type="entry name" value="LDL_receptor-like_sf"/>
</dbReference>
<dbReference type="InterPro" id="IPR051221">
    <property type="entry name" value="LDLR-related"/>
</dbReference>
<dbReference type="InterPro" id="IPR023415">
    <property type="entry name" value="LDLR_class-A_CS"/>
</dbReference>
<dbReference type="InterPro" id="IPR000033">
    <property type="entry name" value="LDLR_classB_rpt"/>
</dbReference>
<dbReference type="InterPro" id="IPR002172">
    <property type="entry name" value="LDrepeatLR_classA_rpt"/>
</dbReference>
<dbReference type="InterPro" id="IPR049883">
    <property type="entry name" value="NOTCH1_EGF-like"/>
</dbReference>
<dbReference type="PANTHER" id="PTHR22722:SF15">
    <property type="entry name" value="LOW-DENSITY LIPOPROTEIN RECEPTOR-RELATED"/>
    <property type="match status" value="1"/>
</dbReference>
<dbReference type="PANTHER" id="PTHR22722">
    <property type="entry name" value="LOW-DENSITY LIPOPROTEIN RECEPTOR-RELATED PROTEIN 2-RELATED"/>
    <property type="match status" value="1"/>
</dbReference>
<dbReference type="Pfam" id="PF07645">
    <property type="entry name" value="EGF_CA"/>
    <property type="match status" value="1"/>
</dbReference>
<dbReference type="Pfam" id="PF14670">
    <property type="entry name" value="FXa_inhibition"/>
    <property type="match status" value="2"/>
</dbReference>
<dbReference type="Pfam" id="PF00057">
    <property type="entry name" value="Ldl_recept_a"/>
    <property type="match status" value="8"/>
</dbReference>
<dbReference type="Pfam" id="PF00058">
    <property type="entry name" value="Ldl_recept_b"/>
    <property type="match status" value="5"/>
</dbReference>
<dbReference type="PRINTS" id="PR00261">
    <property type="entry name" value="LDLRECEPTOR"/>
</dbReference>
<dbReference type="SMART" id="SM00181">
    <property type="entry name" value="EGF"/>
    <property type="match status" value="6"/>
</dbReference>
<dbReference type="SMART" id="SM00179">
    <property type="entry name" value="EGF_CA"/>
    <property type="match status" value="2"/>
</dbReference>
<dbReference type="SMART" id="SM00192">
    <property type="entry name" value="LDLa"/>
    <property type="match status" value="8"/>
</dbReference>
<dbReference type="SMART" id="SM00135">
    <property type="entry name" value="LY"/>
    <property type="match status" value="5"/>
</dbReference>
<dbReference type="SUPFAM" id="SSF57184">
    <property type="entry name" value="Growth factor receptor domain"/>
    <property type="match status" value="1"/>
</dbReference>
<dbReference type="SUPFAM" id="SSF57424">
    <property type="entry name" value="LDL receptor-like module"/>
    <property type="match status" value="8"/>
</dbReference>
<dbReference type="SUPFAM" id="SSF63825">
    <property type="entry name" value="YWTD domain"/>
    <property type="match status" value="1"/>
</dbReference>
<dbReference type="PROSITE" id="PS00010">
    <property type="entry name" value="ASX_HYDROXYL"/>
    <property type="match status" value="2"/>
</dbReference>
<dbReference type="PROSITE" id="PS01186">
    <property type="entry name" value="EGF_2"/>
    <property type="match status" value="3"/>
</dbReference>
<dbReference type="PROSITE" id="PS50026">
    <property type="entry name" value="EGF_3"/>
    <property type="match status" value="2"/>
</dbReference>
<dbReference type="PROSITE" id="PS01187">
    <property type="entry name" value="EGF_CA"/>
    <property type="match status" value="1"/>
</dbReference>
<dbReference type="PROSITE" id="PS01209">
    <property type="entry name" value="LDLRA_1"/>
    <property type="match status" value="8"/>
</dbReference>
<dbReference type="PROSITE" id="PS50068">
    <property type="entry name" value="LDLRA_2"/>
    <property type="match status" value="8"/>
</dbReference>
<dbReference type="PROSITE" id="PS51120">
    <property type="entry name" value="LDLRB"/>
    <property type="match status" value="5"/>
</dbReference>
<comment type="function">
    <text evidence="2 7 10 11 12">Multifunctional cell surface receptor that binds VLDL and transports it into cells by endocytosis and therefore plays an important role in energy metabolism (PubMed:11108739, PubMed:24293365). Also binds to a wide range of other molecules including Reelin/RELN or apolipoprotein E/APOE-containing ligands as well as clusterin/CLU. In the off-state of the pathway LRP8 and VLDLR form homo or heterooligomers (By similarity). Upon binding to ligands, homooligomers are rearranged to higher order receptor clusters that transmit the extracellular RELN signal to intracellular signaling processes by binding to DAB1 on its cytoplasmic tail (By similarity). This interaction results in phosphorylation of DAB1 leading to the ultimate cell responses required for the correct positioning of newly generated neurons (PubMed:23506116). Later, mediates a stop signal for migrating neurons, preventing them from entering the marginal zone (PubMed:17913789).</text>
</comment>
<comment type="subunit">
    <text evidence="2 6 8 9">Homooligomer (By similarity). Binds to the extracellular matrix protein Reelin/RELN (PubMed:10571241). Interacts with LRP8 (By similarity). Interacts with LDLRAP1 (PubMed:12746448). Interacts with SNX17 (PubMed:12169628). Interacts with DAB1. Interacts with PCSK9 (By similarity). Interacts with PAFAH1B3 and PAFAH1B2, the catalytic complex of (PAF-AH (I)) heterotetrameric enzyme; these interactions may modulate the Reelin pathway (By similarity). Interacts with STX5; this interaction mediates VLDLR translocation from the endoplasmic reticulum to the plasma membrane (By similarity). Interacts with CLU (By similarity).</text>
</comment>
<comment type="subcellular location">
    <subcellularLocation>
        <location>Membrane</location>
        <topology>Single-pass type I membrane protein</topology>
    </subcellularLocation>
    <subcellularLocation>
        <location>Membrane</location>
        <location>Clathrin-coated pit</location>
        <topology>Single-pass type I membrane protein</topology>
    </subcellularLocation>
</comment>
<comment type="tissue specificity">
    <text>Abundant in heart and muscle; less in kidney, brain, ovary, testis, lung and adipose tissue. Strongly expressed in neurons (PubMed:23506116).</text>
</comment>
<comment type="PTM">
    <text evidence="1">Ubiquitinated at Lys-839 by MYLIP leading to degradation.</text>
</comment>
<comment type="disruption phenotype">
    <text evidence="7 12">Deletion mutant mice show an increase in serum triglycerides under a high fat diet, suggesting a role in extrahepatic triglyceride uptake (PubMed:11108739). In addition, these mice show a reduced high fat diet-induced inflammation and endoplasmic reticulum (ER) stress in adipose tissue in conjunction with reduced macrophage infiltration (PubMed:24293365).</text>
</comment>
<comment type="miscellaneous">
    <text>LRP8 and VLVLR together are required for correct embryonic development in the brain. Targeted disruption of both genes results in a phenotype virtually indistinguishable from that seen in 'reeler' and 'scrambler' mice. Subtle effects of VLDLR deletion are found mainly in the cerebellum, whereas lack of LRP8 predominantly affects the positioning of the neurons in the neocortex.</text>
</comment>
<keyword id="KW-0153">Cholesterol metabolism</keyword>
<keyword id="KW-0168">Coated pit</keyword>
<keyword id="KW-1015">Disulfide bond</keyword>
<keyword id="KW-0245">EGF-like domain</keyword>
<keyword id="KW-0254">Endocytosis</keyword>
<keyword id="KW-0325">Glycoprotein</keyword>
<keyword id="KW-1017">Isopeptide bond</keyword>
<keyword id="KW-0443">Lipid metabolism</keyword>
<keyword id="KW-0445">Lipid transport</keyword>
<keyword id="KW-0472">Membrane</keyword>
<keyword id="KW-0675">Receptor</keyword>
<keyword id="KW-1185">Reference proteome</keyword>
<keyword id="KW-0677">Repeat</keyword>
<keyword id="KW-0732">Signal</keyword>
<keyword id="KW-0753">Steroid metabolism</keyword>
<keyword id="KW-1207">Sterol metabolism</keyword>
<keyword id="KW-0812">Transmembrane</keyword>
<keyword id="KW-1133">Transmembrane helix</keyword>
<keyword id="KW-0813">Transport</keyword>
<keyword id="KW-0832">Ubl conjugation</keyword>
<keyword id="KW-0850">VLDL</keyword>
<accession>P98156</accession>
<accession>Q64022</accession>
<name>VLDLR_MOUSE</name>
<reference key="1">
    <citation type="journal article" date="1994" name="Eur. J. Biochem.">
        <title>Mouse very-low-density-lipoprotein receptor (VLDLR) cDNA cloning, tissue-specific expression and evolutionary relationship with the low-density-lipoprotein receptor.</title>
        <authorList>
            <person name="Oka K."/>
            <person name="Ishimura-Oka K."/>
            <person name="Chu M.J."/>
            <person name="Sullivan M."/>
            <person name="Krushkal J."/>
            <person name="Li W.H."/>
            <person name="Chan L."/>
        </authorList>
    </citation>
    <scope>NUCLEOTIDE SEQUENCE [MRNA]</scope>
    <source>
        <strain>BALB/cJ</strain>
        <tissue>Heart</tissue>
    </source>
</reference>
<reference key="2">
    <citation type="journal article" date="1994" name="Endocrinology">
        <title>Cloning of a complementary deoxyribonucleic acid encoding the murine homolog of the very low density lipoprotein/apolipoprotein-E receptor: expression pattern and assignment of the gene to mouse chromosome 19.</title>
        <authorList>
            <person name="Gafvels M.E."/>
            <person name="Paavola L.G."/>
            <person name="Boyd C.O."/>
            <person name="Nolan P.M."/>
            <person name="Wittmaack F."/>
            <person name="Chawla A."/>
            <person name="Lazar M.A."/>
            <person name="Bucan M."/>
            <person name="Angelin B.O."/>
            <person name="Strauss J.F."/>
        </authorList>
    </citation>
    <scope>NUCLEOTIDE SEQUENCE [MRNA]</scope>
    <source>
        <tissue>Skeletal muscle</tissue>
    </source>
</reference>
<reference key="3">
    <citation type="journal article" date="1994" name="Mamm. Genome">
        <title>The mouse very low density lipoprotein receptor (Vldlr) gene maps to chromosome 19.</title>
        <authorList>
            <person name="Naggert J.K."/>
            <person name="Mu J.L."/>
        </authorList>
    </citation>
    <scope>NUCLEOTIDE SEQUENCE [GENOMIC DNA] OF 204-262</scope>
</reference>
<reference key="4">
    <citation type="journal article" date="1999" name="Neuron">
        <title>Direct binding of Reelin to VLDL receptor and ApoE receptor 2 induces tyrosine phosphorylation of disabled-1 and modulates tau phosphorylation.</title>
        <authorList>
            <person name="Hiesberger T."/>
            <person name="Trommsdorff M."/>
            <person name="Howell B.W."/>
            <person name="Goffinet A.M."/>
            <person name="Mumby M.C."/>
            <person name="Cooper J.A."/>
            <person name="Herz J."/>
        </authorList>
    </citation>
    <scope>INTERACTION WITH RELN</scope>
</reference>
<reference key="5">
    <citation type="journal article" date="2000" name="J. Lipid Res.">
        <title>LDL receptor deficiency unmasks altered VLDL triglyceride metabolism in VLDL receptor transgenic and knockout mice.</title>
        <authorList>
            <person name="Tacken P.J."/>
            <person name="Teusink B."/>
            <person name="Jong M.C."/>
            <person name="Harats D."/>
            <person name="Havekes L.M."/>
            <person name="van Dijk K.W."/>
            <person name="Hofker M.H."/>
        </authorList>
    </citation>
    <scope>FUNCTION</scope>
    <scope>DISRUPTION PHENOTYPE</scope>
</reference>
<reference key="6">
    <citation type="journal article" date="2002" name="EMBO J.">
        <title>The PX-domain protein SNX17 interacts with members of the LDL receptor family and modulates endocytosis of the LDL receptor.</title>
        <authorList>
            <person name="Stockinger W."/>
            <person name="Sailler B."/>
            <person name="Strasser V."/>
            <person name="Recheis B."/>
            <person name="Fasching D."/>
            <person name="Kahr L."/>
            <person name="Schneider W.J."/>
            <person name="Nimpf J."/>
        </authorList>
    </citation>
    <scope>INTERACTION WITH SNX17</scope>
</reference>
<reference key="7">
    <citation type="journal article" date="2003" name="J. Biol. Chem.">
        <title>Normal sorting but defective endocytosis of the low density lipoprotein receptor in mice with autosomal recessive hypercholesterolemia.</title>
        <authorList>
            <person name="Jones C."/>
            <person name="Hammer R.E."/>
            <person name="Li W.-P."/>
            <person name="Cohen J.C."/>
            <person name="Hobbs H.H."/>
            <person name="Herz J."/>
        </authorList>
    </citation>
    <scope>INTERACTION WITH LDLRAP1</scope>
</reference>
<reference key="8">
    <citation type="journal article" date="2007" name="Development">
        <title>Divergent roles of ApoER2 and Vldlr in the migration of cortical neurons.</title>
        <authorList>
            <person name="Hack I."/>
            <person name="Hellwig S."/>
            <person name="Junghans D."/>
            <person name="Brunne B."/>
            <person name="Bock H.H."/>
            <person name="Zhao S."/>
            <person name="Frotscher M."/>
        </authorList>
    </citation>
    <scope>FUNCTION</scope>
</reference>
<reference key="9">
    <citation type="journal article" date="2010" name="Cell">
        <title>A tissue-specific atlas of mouse protein phosphorylation and expression.</title>
        <authorList>
            <person name="Huttlin E.L."/>
            <person name="Jedrychowski M.P."/>
            <person name="Elias J.E."/>
            <person name="Goswami T."/>
            <person name="Rad R."/>
            <person name="Beausoleil S.A."/>
            <person name="Villen J."/>
            <person name="Haas W."/>
            <person name="Sowa M.E."/>
            <person name="Gygi S.P."/>
        </authorList>
    </citation>
    <scope>IDENTIFICATION BY MASS SPECTROMETRY [LARGE SCALE ANALYSIS]</scope>
    <source>
        <tissue>Brain</tissue>
        <tissue>Brown adipose tissue</tissue>
        <tissue>Heart</tissue>
    </source>
</reference>
<reference key="10">
    <citation type="journal article" date="2010" name="J. Biol. Chem.">
        <title>The E3 ubiquitin ligase IDOL induces the degradation of the low density lipoprotein receptor family members VLDLR and ApoER2.</title>
        <authorList>
            <person name="Hong C."/>
            <person name="Duit S."/>
            <person name="Jalonen P."/>
            <person name="Out R."/>
            <person name="Scheer L."/>
            <person name="Sorrentino V."/>
            <person name="Boyadjian R."/>
            <person name="Rodenburg K.W."/>
            <person name="Foley E."/>
            <person name="Korhonen L."/>
            <person name="Lindholm D."/>
            <person name="Nimpf J."/>
            <person name="van Berkel T.J."/>
            <person name="Tontonoz P."/>
            <person name="Zelcer N."/>
        </authorList>
    </citation>
    <scope>UBIQUITINATION</scope>
</reference>
<reference key="11">
    <citation type="journal article" date="2013" name="Genes Cells">
        <title>Dab1-mediated colocalization of multi-adaptor protein CIN85 with Reelin receptors, ApoER2 and VLDLR, in neurons.</title>
        <authorList>
            <person name="Fuchigami T."/>
            <person name="Sato Y."/>
            <person name="Tomita Y."/>
            <person name="Takano T."/>
            <person name="Miyauchi S.Y."/>
            <person name="Tsuchiya Y."/>
            <person name="Saito T."/>
            <person name="Kubo K."/>
            <person name="Nakajima K."/>
            <person name="Fukuda M."/>
            <person name="Hattori M."/>
            <person name="Hisanaga S."/>
        </authorList>
    </citation>
    <scope>FUNCTION</scope>
    <scope>TISSUE SPECIFICITY</scope>
    <scope>SUBCELLULAR LOCATION</scope>
</reference>
<reference key="12">
    <citation type="journal article" date="2014" name="J. Biol. Chem.">
        <title>Very low density lipoprotein receptor (VLDLR) expression is a determinant factor in adipose tissue inflammation and adipocyte-macrophage interaction.</title>
        <authorList>
            <person name="Nguyen A."/>
            <person name="Tao H."/>
            <person name="Metrione M."/>
            <person name="Hajri T."/>
        </authorList>
    </citation>
    <scope>FUNCTION</scope>
    <scope>DISRUPTION PHENOTYPE</scope>
</reference>
<gene>
    <name type="primary">Vldlr</name>
</gene>